<reference key="1">
    <citation type="journal article" date="2004" name="Nature">
        <title>Genome evolution in yeasts.</title>
        <authorList>
            <person name="Dujon B."/>
            <person name="Sherman D."/>
            <person name="Fischer G."/>
            <person name="Durrens P."/>
            <person name="Casaregola S."/>
            <person name="Lafontaine I."/>
            <person name="de Montigny J."/>
            <person name="Marck C."/>
            <person name="Neuveglise C."/>
            <person name="Talla E."/>
            <person name="Goffard N."/>
            <person name="Frangeul L."/>
            <person name="Aigle M."/>
            <person name="Anthouard V."/>
            <person name="Babour A."/>
            <person name="Barbe V."/>
            <person name="Barnay S."/>
            <person name="Blanchin S."/>
            <person name="Beckerich J.-M."/>
            <person name="Beyne E."/>
            <person name="Bleykasten C."/>
            <person name="Boisrame A."/>
            <person name="Boyer J."/>
            <person name="Cattolico L."/>
            <person name="Confanioleri F."/>
            <person name="de Daruvar A."/>
            <person name="Despons L."/>
            <person name="Fabre E."/>
            <person name="Fairhead C."/>
            <person name="Ferry-Dumazet H."/>
            <person name="Groppi A."/>
            <person name="Hantraye F."/>
            <person name="Hennequin C."/>
            <person name="Jauniaux N."/>
            <person name="Joyet P."/>
            <person name="Kachouri R."/>
            <person name="Kerrest A."/>
            <person name="Koszul R."/>
            <person name="Lemaire M."/>
            <person name="Lesur I."/>
            <person name="Ma L."/>
            <person name="Muller H."/>
            <person name="Nicaud J.-M."/>
            <person name="Nikolski M."/>
            <person name="Oztas S."/>
            <person name="Ozier-Kalogeropoulos O."/>
            <person name="Pellenz S."/>
            <person name="Potier S."/>
            <person name="Richard G.-F."/>
            <person name="Straub M.-L."/>
            <person name="Suleau A."/>
            <person name="Swennen D."/>
            <person name="Tekaia F."/>
            <person name="Wesolowski-Louvel M."/>
            <person name="Westhof E."/>
            <person name="Wirth B."/>
            <person name="Zeniou-Meyer M."/>
            <person name="Zivanovic Y."/>
            <person name="Bolotin-Fukuhara M."/>
            <person name="Thierry A."/>
            <person name="Bouchier C."/>
            <person name="Caudron B."/>
            <person name="Scarpelli C."/>
            <person name="Gaillardin C."/>
            <person name="Weissenbach J."/>
            <person name="Wincker P."/>
            <person name="Souciet J.-L."/>
        </authorList>
    </citation>
    <scope>NUCLEOTIDE SEQUENCE [LARGE SCALE GENOMIC DNA]</scope>
    <source>
        <strain>ATCC 2001 / BCRC 20586 / JCM 3761 / NBRC 0622 / NRRL Y-65 / CBS 138</strain>
    </source>
</reference>
<organism>
    <name type="scientific">Candida glabrata (strain ATCC 2001 / BCRC 20586 / JCM 3761 / NBRC 0622 / NRRL Y-65 / CBS 138)</name>
    <name type="common">Yeast</name>
    <name type="synonym">Nakaseomyces glabratus</name>
    <dbReference type="NCBI Taxonomy" id="284593"/>
    <lineage>
        <taxon>Eukaryota</taxon>
        <taxon>Fungi</taxon>
        <taxon>Dikarya</taxon>
        <taxon>Ascomycota</taxon>
        <taxon>Saccharomycotina</taxon>
        <taxon>Saccharomycetes</taxon>
        <taxon>Saccharomycetales</taxon>
        <taxon>Saccharomycetaceae</taxon>
        <taxon>Nakaseomyces</taxon>
    </lineage>
</organism>
<accession>Q6FXZ0</accession>
<comment type="similarity">
    <text evidence="1">Belongs to the eukaryotic ribosomal protein eL30 family.</text>
</comment>
<name>RL30_CANGA</name>
<proteinExistence type="inferred from homology"/>
<gene>
    <name type="primary">RPL30</name>
    <name type="ordered locus">CAGL0A01540g</name>
</gene>
<keyword id="KW-1185">Reference proteome</keyword>
<keyword id="KW-0687">Ribonucleoprotein</keyword>
<keyword id="KW-0689">Ribosomal protein</keyword>
<evidence type="ECO:0000305" key="1"/>
<feature type="chain" id="PRO_0000146137" description="Large ribosomal subunit protein eL30">
    <location>
        <begin position="1"/>
        <end position="105"/>
    </location>
</feature>
<protein>
    <recommendedName>
        <fullName evidence="1">Large ribosomal subunit protein eL30</fullName>
    </recommendedName>
    <alternativeName>
        <fullName>60S ribosomal protein L30</fullName>
    </alternativeName>
</protein>
<dbReference type="EMBL" id="CR380947">
    <property type="protein sequence ID" value="CAG57725.1"/>
    <property type="molecule type" value="Genomic_DNA"/>
</dbReference>
<dbReference type="RefSeq" id="XP_444832.1">
    <property type="nucleotide sequence ID" value="XM_444832.1"/>
</dbReference>
<dbReference type="SMR" id="Q6FXZ0"/>
<dbReference type="FunCoup" id="Q6FXZ0">
    <property type="interactions" value="1347"/>
</dbReference>
<dbReference type="STRING" id="284593.Q6FXZ0"/>
<dbReference type="EnsemblFungi" id="CAGL0A01540g-T">
    <property type="protein sequence ID" value="CAGL0A01540g-T-p1"/>
    <property type="gene ID" value="CAGL0A01540g"/>
</dbReference>
<dbReference type="KEGG" id="cgr:2886362"/>
<dbReference type="CGD" id="CAL0126731">
    <property type="gene designation" value="CAGL0A01540g"/>
</dbReference>
<dbReference type="VEuPathDB" id="FungiDB:B1J91_A01540g"/>
<dbReference type="VEuPathDB" id="FungiDB:CAGL0A01540g"/>
<dbReference type="eggNOG" id="KOG2988">
    <property type="taxonomic scope" value="Eukaryota"/>
</dbReference>
<dbReference type="HOGENOM" id="CLU_130502_0_1_1"/>
<dbReference type="InParanoid" id="Q6FXZ0"/>
<dbReference type="OMA" id="YFQGGNN"/>
<dbReference type="Proteomes" id="UP000002428">
    <property type="component" value="Chromosome A"/>
</dbReference>
<dbReference type="GO" id="GO:0022625">
    <property type="term" value="C:cytosolic large ribosomal subunit"/>
    <property type="evidence" value="ECO:0007669"/>
    <property type="project" value="EnsemblFungi"/>
</dbReference>
<dbReference type="GO" id="GO:0005576">
    <property type="term" value="C:extracellular region"/>
    <property type="evidence" value="ECO:0000314"/>
    <property type="project" value="CGD"/>
</dbReference>
<dbReference type="GO" id="GO:0062040">
    <property type="term" value="C:fungal biofilm matrix"/>
    <property type="evidence" value="ECO:0000314"/>
    <property type="project" value="CGD"/>
</dbReference>
<dbReference type="GO" id="GO:0030627">
    <property type="term" value="F:pre-mRNA 5'-splice site binding"/>
    <property type="evidence" value="ECO:0007669"/>
    <property type="project" value="EnsemblFungi"/>
</dbReference>
<dbReference type="GO" id="GO:0003735">
    <property type="term" value="F:structural constituent of ribosome"/>
    <property type="evidence" value="ECO:0007669"/>
    <property type="project" value="EnsemblFungi"/>
</dbReference>
<dbReference type="GO" id="GO:0048025">
    <property type="term" value="P:negative regulation of mRNA splicing, via spliceosome"/>
    <property type="evidence" value="ECO:0007669"/>
    <property type="project" value="EnsemblFungi"/>
</dbReference>
<dbReference type="GO" id="GO:0006364">
    <property type="term" value="P:rRNA processing"/>
    <property type="evidence" value="ECO:0007669"/>
    <property type="project" value="EnsemblFungi"/>
</dbReference>
<dbReference type="FunFam" id="3.30.1330.30:FF:000001">
    <property type="entry name" value="60S ribosomal protein L30"/>
    <property type="match status" value="1"/>
</dbReference>
<dbReference type="Gene3D" id="3.30.1330.30">
    <property type="match status" value="1"/>
</dbReference>
<dbReference type="InterPro" id="IPR039109">
    <property type="entry name" value="Ribosomal_eL30-like"/>
</dbReference>
<dbReference type="InterPro" id="IPR029064">
    <property type="entry name" value="Ribosomal_eL30-like_sf"/>
</dbReference>
<dbReference type="InterPro" id="IPR022991">
    <property type="entry name" value="Ribosomal_eL30_CS"/>
</dbReference>
<dbReference type="InterPro" id="IPR004038">
    <property type="entry name" value="Ribosomal_eL8/eL30/eS12/Gad45"/>
</dbReference>
<dbReference type="NCBIfam" id="NF002172">
    <property type="entry name" value="PRK01018.1"/>
    <property type="match status" value="1"/>
</dbReference>
<dbReference type="PANTHER" id="PTHR11449">
    <property type="entry name" value="RIBOSOMAL PROTEIN L30"/>
    <property type="match status" value="1"/>
</dbReference>
<dbReference type="Pfam" id="PF01248">
    <property type="entry name" value="Ribosomal_L7Ae"/>
    <property type="match status" value="1"/>
</dbReference>
<dbReference type="SUPFAM" id="SSF55315">
    <property type="entry name" value="L30e-like"/>
    <property type="match status" value="1"/>
</dbReference>
<dbReference type="PROSITE" id="PS00709">
    <property type="entry name" value="RIBOSOMAL_L30E_1"/>
    <property type="match status" value="1"/>
</dbReference>
<dbReference type="PROSITE" id="PS00993">
    <property type="entry name" value="RIBOSOMAL_L30E_2"/>
    <property type="match status" value="1"/>
</dbReference>
<sequence length="105" mass="11369">MAPIKTQESINQKLALVVKSGKFTLGYKSTIKSLRQGKSKLIIIAANTPVLRKSELEYYAMLSKTKVYYFQGGNNELGTAVGKLFRVGVVSVLDAGDSDILTALA</sequence>